<dbReference type="EMBL" id="U00096">
    <property type="protein sequence ID" value="AAC73881.2"/>
    <property type="molecule type" value="Genomic_DNA"/>
</dbReference>
<dbReference type="EMBL" id="AP009048">
    <property type="protein sequence ID" value="BAA35454.2"/>
    <property type="molecule type" value="Genomic_DNA"/>
</dbReference>
<dbReference type="PIR" id="B64816">
    <property type="entry name" value="B64816"/>
</dbReference>
<dbReference type="RefSeq" id="NP_415315.4">
    <property type="nucleotide sequence ID" value="NC_000913.3"/>
</dbReference>
<dbReference type="RefSeq" id="WP_000996107.1">
    <property type="nucleotide sequence ID" value="NZ_LN832404.1"/>
</dbReference>
<dbReference type="SMR" id="P0A9U1"/>
<dbReference type="BioGRID" id="4261836">
    <property type="interactions" value="48"/>
</dbReference>
<dbReference type="BioGRID" id="849787">
    <property type="interactions" value="1"/>
</dbReference>
<dbReference type="ComplexPortal" id="CPX-4443">
    <property type="entry name" value="Sodium/lithium ABC transporter complex"/>
</dbReference>
<dbReference type="DIP" id="DIP-48149N"/>
<dbReference type="FunCoup" id="P0A9U1">
    <property type="interactions" value="377"/>
</dbReference>
<dbReference type="IntAct" id="P0A9U1">
    <property type="interactions" value="7"/>
</dbReference>
<dbReference type="STRING" id="511145.b0794"/>
<dbReference type="TCDB" id="3.A.1.105.15">
    <property type="family name" value="the atp-binding cassette (abc) superfamily"/>
</dbReference>
<dbReference type="jPOST" id="P0A9U1"/>
<dbReference type="PaxDb" id="511145-b0794"/>
<dbReference type="EnsemblBacteria" id="AAC73881">
    <property type="protein sequence ID" value="AAC73881"/>
    <property type="gene ID" value="b0794"/>
</dbReference>
<dbReference type="GeneID" id="945413"/>
<dbReference type="KEGG" id="ecj:JW5104"/>
<dbReference type="KEGG" id="eco:b0794"/>
<dbReference type="KEGG" id="ecoc:C3026_05020"/>
<dbReference type="PATRIC" id="fig|1411691.4.peg.1484"/>
<dbReference type="EchoBASE" id="EB3098"/>
<dbReference type="eggNOG" id="COG1131">
    <property type="taxonomic scope" value="Bacteria"/>
</dbReference>
<dbReference type="HOGENOM" id="CLU_000604_83_0_6"/>
<dbReference type="InParanoid" id="P0A9U1"/>
<dbReference type="OMA" id="EACDHVL"/>
<dbReference type="OrthoDB" id="9805029at2"/>
<dbReference type="PhylomeDB" id="P0A9U1"/>
<dbReference type="BioCyc" id="EcoCyc:YBHF-MONOMER"/>
<dbReference type="BioCyc" id="MetaCyc:YBHF-MONOMER"/>
<dbReference type="PRO" id="PR:P0A9U1"/>
<dbReference type="Proteomes" id="UP000000625">
    <property type="component" value="Chromosome"/>
</dbReference>
<dbReference type="GO" id="GO:0055052">
    <property type="term" value="C:ATP-binding cassette (ABC) transporter complex, substrate-binding subunit-containing"/>
    <property type="evidence" value="ECO:0000303"/>
    <property type="project" value="ComplexPortal"/>
</dbReference>
<dbReference type="GO" id="GO:0005886">
    <property type="term" value="C:plasma membrane"/>
    <property type="evidence" value="ECO:0000314"/>
    <property type="project" value="EcoCyc"/>
</dbReference>
<dbReference type="GO" id="GO:0005524">
    <property type="term" value="F:ATP binding"/>
    <property type="evidence" value="ECO:0007669"/>
    <property type="project" value="UniProtKB-KW"/>
</dbReference>
<dbReference type="GO" id="GO:0016887">
    <property type="term" value="F:ATP hydrolysis activity"/>
    <property type="evidence" value="ECO:0007669"/>
    <property type="project" value="InterPro"/>
</dbReference>
<dbReference type="GO" id="GO:0015562">
    <property type="term" value="F:efflux transmembrane transporter activity"/>
    <property type="evidence" value="ECO:0000315"/>
    <property type="project" value="EcoCyc"/>
</dbReference>
<dbReference type="GO" id="GO:0090452">
    <property type="term" value="P:lithium ion transmembrane transport"/>
    <property type="evidence" value="ECO:0000303"/>
    <property type="project" value="ComplexPortal"/>
</dbReference>
<dbReference type="GO" id="GO:0035725">
    <property type="term" value="P:sodium ion transmembrane transport"/>
    <property type="evidence" value="ECO:0000303"/>
    <property type="project" value="ComplexPortal"/>
</dbReference>
<dbReference type="GO" id="GO:0015904">
    <property type="term" value="P:tetracycline transmembrane transport"/>
    <property type="evidence" value="ECO:0000303"/>
    <property type="project" value="ComplexPortal"/>
</dbReference>
<dbReference type="GO" id="GO:1990961">
    <property type="term" value="P:xenobiotic detoxification by transmembrane export across the plasma membrane"/>
    <property type="evidence" value="ECO:0000315"/>
    <property type="project" value="EcoCyc"/>
</dbReference>
<dbReference type="GO" id="GO:0006855">
    <property type="term" value="P:xenobiotic transmembrane transport"/>
    <property type="evidence" value="ECO:0000303"/>
    <property type="project" value="ComplexPortal"/>
</dbReference>
<dbReference type="CDD" id="cd03230">
    <property type="entry name" value="ABC_DR_subfamily_A"/>
    <property type="match status" value="2"/>
</dbReference>
<dbReference type="FunFam" id="3.40.50.300:FF:000686">
    <property type="entry name" value="Multidrug ABC transporter ATP-binding protein"/>
    <property type="match status" value="1"/>
</dbReference>
<dbReference type="FunFam" id="3.40.50.300:FF:000883">
    <property type="entry name" value="Multidrug ABC transporter ATP-binding protein"/>
    <property type="match status" value="1"/>
</dbReference>
<dbReference type="Gene3D" id="3.40.50.300">
    <property type="entry name" value="P-loop containing nucleotide triphosphate hydrolases"/>
    <property type="match status" value="2"/>
</dbReference>
<dbReference type="InterPro" id="IPR003593">
    <property type="entry name" value="AAA+_ATPase"/>
</dbReference>
<dbReference type="InterPro" id="IPR003439">
    <property type="entry name" value="ABC_transporter-like_ATP-bd"/>
</dbReference>
<dbReference type="InterPro" id="IPR017871">
    <property type="entry name" value="ABC_transporter-like_CS"/>
</dbReference>
<dbReference type="InterPro" id="IPR027417">
    <property type="entry name" value="P-loop_NTPase"/>
</dbReference>
<dbReference type="PANTHER" id="PTHR43038:SF3">
    <property type="entry name" value="ABC TRANSPORTER G FAMILY MEMBER 20 ISOFORM X1"/>
    <property type="match status" value="1"/>
</dbReference>
<dbReference type="PANTHER" id="PTHR43038">
    <property type="entry name" value="ATP-BINDING CASSETTE, SUB-FAMILY H, MEMBER 1"/>
    <property type="match status" value="1"/>
</dbReference>
<dbReference type="Pfam" id="PF00005">
    <property type="entry name" value="ABC_tran"/>
    <property type="match status" value="2"/>
</dbReference>
<dbReference type="SMART" id="SM00382">
    <property type="entry name" value="AAA"/>
    <property type="match status" value="2"/>
</dbReference>
<dbReference type="SUPFAM" id="SSF52540">
    <property type="entry name" value="P-loop containing nucleoside triphosphate hydrolases"/>
    <property type="match status" value="2"/>
</dbReference>
<dbReference type="PROSITE" id="PS00211">
    <property type="entry name" value="ABC_TRANSPORTER_1"/>
    <property type="match status" value="1"/>
</dbReference>
<dbReference type="PROSITE" id="PS50893">
    <property type="entry name" value="ABC_TRANSPORTER_2"/>
    <property type="match status" value="2"/>
</dbReference>
<reference key="1">
    <citation type="journal article" date="1996" name="DNA Res.">
        <title>A 718-kb DNA sequence of the Escherichia coli K-12 genome corresponding to the 12.7-28.0 min region on the linkage map.</title>
        <authorList>
            <person name="Oshima T."/>
            <person name="Aiba H."/>
            <person name="Baba T."/>
            <person name="Fujita K."/>
            <person name="Hayashi K."/>
            <person name="Honjo A."/>
            <person name="Ikemoto K."/>
            <person name="Inada T."/>
            <person name="Itoh T."/>
            <person name="Kajihara M."/>
            <person name="Kanai K."/>
            <person name="Kashimoto K."/>
            <person name="Kimura S."/>
            <person name="Kitagawa M."/>
            <person name="Makino K."/>
            <person name="Masuda S."/>
            <person name="Miki T."/>
            <person name="Mizobuchi K."/>
            <person name="Mori H."/>
            <person name="Motomura K."/>
            <person name="Nakamura Y."/>
            <person name="Nashimoto H."/>
            <person name="Nishio Y."/>
            <person name="Saito N."/>
            <person name="Sampei G."/>
            <person name="Seki Y."/>
            <person name="Tagami H."/>
            <person name="Takemoto K."/>
            <person name="Wada C."/>
            <person name="Yamamoto Y."/>
            <person name="Yano M."/>
            <person name="Horiuchi T."/>
        </authorList>
    </citation>
    <scope>NUCLEOTIDE SEQUENCE [LARGE SCALE GENOMIC DNA]</scope>
    <source>
        <strain>K12 / W3110 / ATCC 27325 / DSM 5911</strain>
    </source>
</reference>
<reference key="2">
    <citation type="journal article" date="1997" name="Science">
        <title>The complete genome sequence of Escherichia coli K-12.</title>
        <authorList>
            <person name="Blattner F.R."/>
            <person name="Plunkett G. III"/>
            <person name="Bloch C.A."/>
            <person name="Perna N.T."/>
            <person name="Burland V."/>
            <person name="Riley M."/>
            <person name="Collado-Vides J."/>
            <person name="Glasner J.D."/>
            <person name="Rode C.K."/>
            <person name="Mayhew G.F."/>
            <person name="Gregor J."/>
            <person name="Davis N.W."/>
            <person name="Kirkpatrick H.A."/>
            <person name="Goeden M.A."/>
            <person name="Rose D.J."/>
            <person name="Mau B."/>
            <person name="Shao Y."/>
        </authorList>
    </citation>
    <scope>NUCLEOTIDE SEQUENCE [LARGE SCALE GENOMIC DNA]</scope>
    <source>
        <strain>K12 / MG1655 / ATCC 47076</strain>
    </source>
</reference>
<reference key="3">
    <citation type="journal article" date="2006" name="Mol. Syst. Biol.">
        <title>Highly accurate genome sequences of Escherichia coli K-12 strains MG1655 and W3110.</title>
        <authorList>
            <person name="Hayashi K."/>
            <person name="Morooka N."/>
            <person name="Yamamoto Y."/>
            <person name="Fujita K."/>
            <person name="Isono K."/>
            <person name="Choi S."/>
            <person name="Ohtsubo E."/>
            <person name="Baba T."/>
            <person name="Wanner B.L."/>
            <person name="Mori H."/>
            <person name="Horiuchi T."/>
        </authorList>
    </citation>
    <scope>NUCLEOTIDE SEQUENCE [LARGE SCALE GENOMIC DNA]</scope>
    <source>
        <strain>K12 / W3110 / ATCC 27325 / DSM 5911</strain>
    </source>
</reference>
<reference key="4">
    <citation type="journal article" date="2016" name="Microbiology">
        <title>Transcription factor CecR (YbiH) regulates a set of genes affecting the sensitivity of Escherichia coli against cefoperazone and chloramphenicol.</title>
        <authorList>
            <person name="Yamanaka Y."/>
            <person name="Shimada T."/>
            <person name="Yamamoto K."/>
            <person name="Ishihama A."/>
        </authorList>
    </citation>
    <scope>FUNCTION</scope>
    <scope>INDUCTION</scope>
    <scope>DISRUPTION PHENOTYPE</scope>
    <source>
        <strain>K12 / W3110 / ATCC 27325 / DSM 5911</strain>
    </source>
</reference>
<proteinExistence type="evidence at protein level"/>
<sequence length="578" mass="63132">MNDAVITLNGLEKRFPGMDKPAVAPLDCTIHAGYVTGLVGPDGAGKTTLMRMLAGLLKPDSGSATVIGFDPIKNDGALHAVLGYMPQKFGLYEDLTVMENLNLYADLRSVTGEARKQTFARLLEFTSLGPFTGRLAGKLSGGMKQKLGLACTLVGEPKVLLLDEPGVGVDPISRRELWQMVHELAGEGMLILWSTSYLDEAEQCRDVLLMNEGELLYQGEPKALTQTMAGRSFLMTSPHEGNRKLLQRALKLPQVSDGMIQGKSVRLILKKEATPDDIRHADGMPEININETTPRFEDAFIDLLGGAGTSESPLGAILHTVEGTPGETVIEAKELTKKFGDFAATDHVNFAVKRGEIFGLLGPNGAGKSTTFKMMCGLLVPTSGQALVLGMDLKESSGKARQHLGYMAQKFSLYGNLTVEQNLRFFSGVYGLRGRAQNEKISRMSEAFGLKSIASHATDELPLGFKQRLALACSLMHEPDILFLDEPTSGVDPLTRREFWLHINSMVEKGVTVMVTTHFMDEAEYCDRIGLVYRGKLIASGTPDDLKAQSANDEQPDPTMEQAFIQLIHDWDKEHSNE</sequence>
<organism>
    <name type="scientific">Escherichia coli (strain K12)</name>
    <dbReference type="NCBI Taxonomy" id="83333"/>
    <lineage>
        <taxon>Bacteria</taxon>
        <taxon>Pseudomonadati</taxon>
        <taxon>Pseudomonadota</taxon>
        <taxon>Gammaproteobacteria</taxon>
        <taxon>Enterobacterales</taxon>
        <taxon>Enterobacteriaceae</taxon>
        <taxon>Escherichia</taxon>
    </lineage>
</organism>
<comment type="function">
    <text evidence="4">Part of the ABC transporter complex YbhFSR that could be involved in efflux of cefoperazone. Probably responsible for energy coupling to the transport system.</text>
</comment>
<comment type="subunit">
    <text evidence="3">The complex is probably composed of two ATP-binding proteins (YbhF) and two transmembrane proteins (YbhR and YbhS).</text>
</comment>
<comment type="interaction">
    <interactant intactId="EBI-547696">
        <id>P0A9U1</id>
    </interactant>
    <interactant intactId="EBI-542683">
        <id>P0AFG8</id>
        <label>aceE</label>
    </interactant>
    <organismsDiffer>false</organismsDiffer>
    <experiments>3</experiments>
</comment>
<comment type="interaction">
    <interactant intactId="EBI-547696">
        <id>P0A9U1</id>
    </interactant>
    <interactant intactId="EBI-1113126">
        <id>P60566</id>
        <label>fixA</label>
    </interactant>
    <organismsDiffer>false</organismsDiffer>
    <experiments>3</experiments>
</comment>
<comment type="induction">
    <text evidence="2">Repressed by the transcriptional regulator CecR.</text>
</comment>
<comment type="disruption phenotype">
    <text evidence="2">Mutant shows increased sensitivity to cefoperazone, a third-generation cephalosporin.</text>
</comment>
<comment type="similarity">
    <text evidence="3">Belongs to the ABC transporter superfamily.</text>
</comment>
<keyword id="KW-0067">ATP-binding</keyword>
<keyword id="KW-0547">Nucleotide-binding</keyword>
<keyword id="KW-1185">Reference proteome</keyword>
<keyword id="KW-0677">Repeat</keyword>
<keyword id="KW-0813">Transport</keyword>
<name>YBHF_ECOLI</name>
<protein>
    <recommendedName>
        <fullName evidence="3">Probable multidrug ABC transporter ATP-binding protein YbhF</fullName>
    </recommendedName>
</protein>
<accession>P0A9U1</accession>
<accession>P75776</accession>
<accession>Q9R7S3</accession>
<accession>Q9R7S4</accession>
<evidence type="ECO:0000255" key="1">
    <source>
        <dbReference type="PROSITE-ProRule" id="PRU00434"/>
    </source>
</evidence>
<evidence type="ECO:0000269" key="2">
    <source>
    </source>
</evidence>
<evidence type="ECO:0000305" key="3"/>
<evidence type="ECO:0000305" key="4">
    <source>
    </source>
</evidence>
<gene>
    <name type="primary">ybhF</name>
    <name type="ordered locus">b0794</name>
    <name type="ordered locus">JW5104</name>
</gene>
<feature type="chain" id="PRO_0000093156" description="Probable multidrug ABC transporter ATP-binding protein YbhF">
    <location>
        <begin position="1"/>
        <end position="578"/>
    </location>
</feature>
<feature type="domain" description="ABC transporter 1" evidence="1">
    <location>
        <begin position="6"/>
        <end position="237"/>
    </location>
</feature>
<feature type="domain" description="ABC transporter 2" evidence="1">
    <location>
        <begin position="330"/>
        <end position="559"/>
    </location>
</feature>
<feature type="binding site" evidence="1">
    <location>
        <begin position="40"/>
        <end position="47"/>
    </location>
    <ligand>
        <name>ATP</name>
        <dbReference type="ChEBI" id="CHEBI:30616"/>
        <label>1</label>
    </ligand>
</feature>
<feature type="binding site" evidence="1">
    <location>
        <begin position="362"/>
        <end position="369"/>
    </location>
    <ligand>
        <name>ATP</name>
        <dbReference type="ChEBI" id="CHEBI:30616"/>
        <label>2</label>
    </ligand>
</feature>